<proteinExistence type="inferred from homology"/>
<organism>
    <name type="scientific">Euglena gracilis</name>
    <dbReference type="NCBI Taxonomy" id="3039"/>
    <lineage>
        <taxon>Eukaryota</taxon>
        <taxon>Discoba</taxon>
        <taxon>Euglenozoa</taxon>
        <taxon>Euglenida</taxon>
        <taxon>Spirocuta</taxon>
        <taxon>Euglenophyceae</taxon>
        <taxon>Euglenales</taxon>
        <taxon>Euglenaceae</taxon>
        <taxon>Euglena</taxon>
    </lineage>
</organism>
<dbReference type="EMBL" id="Z11874">
    <property type="protein sequence ID" value="CAA77923.1"/>
    <property type="molecule type" value="Genomic_DNA"/>
</dbReference>
<dbReference type="EMBL" id="X70810">
    <property type="protein sequence ID" value="CAA50106.1"/>
    <property type="molecule type" value="Genomic_DNA"/>
</dbReference>
<dbReference type="PIR" id="S09287">
    <property type="entry name" value="R5EG14"/>
</dbReference>
<dbReference type="RefSeq" id="NP_041919.1">
    <property type="nucleotide sequence ID" value="NC_001603.2"/>
</dbReference>
<dbReference type="SMR" id="P21511"/>
<dbReference type="GeneID" id="807534"/>
<dbReference type="GO" id="GO:0009507">
    <property type="term" value="C:chloroplast"/>
    <property type="evidence" value="ECO:0007669"/>
    <property type="project" value="UniProtKB-SubCell"/>
</dbReference>
<dbReference type="GO" id="GO:0022625">
    <property type="term" value="C:cytosolic large ribosomal subunit"/>
    <property type="evidence" value="ECO:0007669"/>
    <property type="project" value="TreeGrafter"/>
</dbReference>
<dbReference type="GO" id="GO:0070180">
    <property type="term" value="F:large ribosomal subunit rRNA binding"/>
    <property type="evidence" value="ECO:0007669"/>
    <property type="project" value="TreeGrafter"/>
</dbReference>
<dbReference type="GO" id="GO:0003735">
    <property type="term" value="F:structural constituent of ribosome"/>
    <property type="evidence" value="ECO:0007669"/>
    <property type="project" value="InterPro"/>
</dbReference>
<dbReference type="GO" id="GO:0006412">
    <property type="term" value="P:translation"/>
    <property type="evidence" value="ECO:0007669"/>
    <property type="project" value="UniProtKB-UniRule"/>
</dbReference>
<dbReference type="CDD" id="cd00337">
    <property type="entry name" value="Ribosomal_uL14"/>
    <property type="match status" value="1"/>
</dbReference>
<dbReference type="FunFam" id="2.40.150.20:FF:000001">
    <property type="entry name" value="50S ribosomal protein L14"/>
    <property type="match status" value="1"/>
</dbReference>
<dbReference type="Gene3D" id="2.40.150.20">
    <property type="entry name" value="Ribosomal protein L14"/>
    <property type="match status" value="1"/>
</dbReference>
<dbReference type="HAMAP" id="MF_01367">
    <property type="entry name" value="Ribosomal_uL14"/>
    <property type="match status" value="1"/>
</dbReference>
<dbReference type="InterPro" id="IPR000218">
    <property type="entry name" value="Ribosomal_uL14"/>
</dbReference>
<dbReference type="InterPro" id="IPR005745">
    <property type="entry name" value="Ribosomal_uL14_bac-type"/>
</dbReference>
<dbReference type="InterPro" id="IPR019972">
    <property type="entry name" value="Ribosomal_uL14_CS"/>
</dbReference>
<dbReference type="InterPro" id="IPR036853">
    <property type="entry name" value="Ribosomal_uL14_sf"/>
</dbReference>
<dbReference type="NCBIfam" id="TIGR01067">
    <property type="entry name" value="rplN_bact"/>
    <property type="match status" value="1"/>
</dbReference>
<dbReference type="PANTHER" id="PTHR11761">
    <property type="entry name" value="50S/60S RIBOSOMAL PROTEIN L14/L23"/>
    <property type="match status" value="1"/>
</dbReference>
<dbReference type="PANTHER" id="PTHR11761:SF3">
    <property type="entry name" value="LARGE RIBOSOMAL SUBUNIT PROTEIN UL14M"/>
    <property type="match status" value="1"/>
</dbReference>
<dbReference type="Pfam" id="PF00238">
    <property type="entry name" value="Ribosomal_L14"/>
    <property type="match status" value="1"/>
</dbReference>
<dbReference type="SMART" id="SM01374">
    <property type="entry name" value="Ribosomal_L14"/>
    <property type="match status" value="1"/>
</dbReference>
<dbReference type="SUPFAM" id="SSF50193">
    <property type="entry name" value="Ribosomal protein L14"/>
    <property type="match status" value="1"/>
</dbReference>
<dbReference type="PROSITE" id="PS00049">
    <property type="entry name" value="RIBOSOMAL_L14"/>
    <property type="match status" value="1"/>
</dbReference>
<accession>P21511</accession>
<keyword id="KW-0150">Chloroplast</keyword>
<keyword id="KW-0934">Plastid</keyword>
<keyword id="KW-0687">Ribonucleoprotein</keyword>
<keyword id="KW-0689">Ribosomal protein</keyword>
<keyword id="KW-0694">RNA-binding</keyword>
<keyword id="KW-0699">rRNA-binding</keyword>
<gene>
    <name evidence="1" type="primary">rpl14</name>
</gene>
<sequence length="121" mass="13421">MIKPQTYLKIADNTGAQKIMCIRILGPNCQYANIGDIIIAVVKEAIPNMVVKKSDIVKAVIVRTVKGVRRESGMAIRFDENAAVIINNDRSPKGTRIFGPIARELREKEFVKIMSLAPEVV</sequence>
<geneLocation type="chloroplast"/>
<evidence type="ECO:0000255" key="1">
    <source>
        <dbReference type="HAMAP-Rule" id="MF_01367"/>
    </source>
</evidence>
<evidence type="ECO:0000305" key="2"/>
<reference key="1">
    <citation type="journal article" date="1989" name="Nucleic Acids Res.">
        <title>Euglena gracilis chloroplast ribosomal protein operon: a new chloroplast gene for ribosomal protein L5 and description of a novel organelle intron category designated group III.</title>
        <authorList>
            <person name="Christopher D.A."/>
            <person name="Hallick R.B."/>
        </authorList>
    </citation>
    <scope>NUCLEOTIDE SEQUENCE [GENOMIC DNA]</scope>
    <source>
        <strain>Z / UTEX 753</strain>
    </source>
</reference>
<reference key="2">
    <citation type="journal article" date="1993" name="Nucleic Acids Res.">
        <title>Complete sequence of Euglena gracilis chloroplast DNA.</title>
        <authorList>
            <person name="Hallick R.B."/>
            <person name="Hong L."/>
            <person name="Drager R.G."/>
            <person name="Favreau M.R."/>
            <person name="Monfort A."/>
            <person name="Orsat B."/>
            <person name="Spielmann A."/>
            <person name="Stutz E."/>
        </authorList>
    </citation>
    <scope>NUCLEOTIDE SEQUENCE [LARGE SCALE GENOMIC DNA]</scope>
    <source>
        <strain>Z / UTEX 753</strain>
    </source>
</reference>
<protein>
    <recommendedName>
        <fullName evidence="1">Large ribosomal subunit protein uL14c</fullName>
    </recommendedName>
    <alternativeName>
        <fullName evidence="2">50S ribosomal protein L14, chloroplastic</fullName>
    </alternativeName>
</protein>
<comment type="function">
    <text evidence="1">Binds to 23S rRNA.</text>
</comment>
<comment type="subunit">
    <text evidence="1">Part of the 50S ribosomal subunit.</text>
</comment>
<comment type="subcellular location">
    <subcellularLocation>
        <location>Plastid</location>
        <location>Chloroplast</location>
    </subcellularLocation>
</comment>
<comment type="similarity">
    <text evidence="1">Belongs to the universal ribosomal protein uL14 family.</text>
</comment>
<feature type="chain" id="PRO_0000128587" description="Large ribosomal subunit protein uL14c">
    <location>
        <begin position="1"/>
        <end position="121"/>
    </location>
</feature>
<name>RK14_EUGGR</name>